<protein>
    <recommendedName>
        <fullName>Probable histidine-binding protein</fullName>
        <shortName>HBP</shortName>
    </recommendedName>
    <alternativeName>
        <fullName>p29</fullName>
    </alternativeName>
</protein>
<proteinExistence type="evidence at protein level"/>
<gene>
    <name type="primary">hisJ</name>
    <name type="synonym">cjaC</name>
    <name type="ordered locus">Cj0734c</name>
</gene>
<comment type="function">
    <text evidence="2">Involved in histidine transport.</text>
</comment>
<comment type="subcellular location">
    <subcellularLocation>
        <location evidence="3">Cell membrane</location>
        <topology evidence="3">Lipid-anchor</topology>
    </subcellularLocation>
    <text evidence="2">Periplasmic when expressed in E.coli.</text>
</comment>
<comment type="similarity">
    <text evidence="3">Belongs to the bacterial solute-binding protein 3 family.</text>
</comment>
<evidence type="ECO:0000255" key="1">
    <source>
        <dbReference type="PROSITE-ProRule" id="PRU00303"/>
    </source>
</evidence>
<evidence type="ECO:0000269" key="2">
    <source>
    </source>
</evidence>
<evidence type="ECO:0000305" key="3"/>
<organism>
    <name type="scientific">Campylobacter jejuni subsp. jejuni serotype O:2 (strain ATCC 700819 / NCTC 11168)</name>
    <dbReference type="NCBI Taxonomy" id="192222"/>
    <lineage>
        <taxon>Bacteria</taxon>
        <taxon>Pseudomonadati</taxon>
        <taxon>Campylobacterota</taxon>
        <taxon>Epsilonproteobacteria</taxon>
        <taxon>Campylobacterales</taxon>
        <taxon>Campylobacteraceae</taxon>
        <taxon>Campylobacter</taxon>
    </lineage>
</organism>
<sequence>MKKFLTAFLVAFTGLFLVACQNTKTENNASNEANTTLTLKVGTAPNYKPFNFKQDSKLTGFDTDLIEEIAKKNGIEIVWVETNFDGLIPALKSGKIDMIASAMSATDERRQSVDFTKPYYMSKNLYLKLKNNDSLQTKNDLEGKKIGVQLGTLQENTAKAIKNAQVQSNKDLNIAVLALKNNKIDAIVADQDTAKGFLAENPELVSFYQETDGGEGFSFAFDKNKQKDIIEIFNKGIDEAKTDGFYDTLIKKYELE</sequence>
<reference key="1">
    <citation type="journal article" date="1996" name="Infect. Immun.">
        <title>Molecular characterization of a Campylobacter jejuni 29-kilodalton periplasmic binding protein.</title>
        <authorList>
            <person name="Garvis S.G."/>
            <person name="Puzon G.J."/>
            <person name="Konkel M.E."/>
        </authorList>
    </citation>
    <scope>NUCLEOTIDE SEQUENCE [GENOMIC DNA]</scope>
    <scope>FUNCTION IN HISTIDINE TRANSPORT</scope>
    <source>
        <strain>M275</strain>
    </source>
</reference>
<reference key="2">
    <citation type="journal article" date="1997" name="Adv. Exp. Med. Biol.">
        <title>Cloning, sequencing, and expression of a Campylobacter jejuni periplasmic binding protein (P29) involved in histidine transport.</title>
        <authorList>
            <person name="Garvis S.G."/>
            <person name="Puzon G.J."/>
            <person name="Konkel M.E."/>
        </authorList>
    </citation>
    <scope>NUCLEOTIDE SEQUENCE [GENOMIC DNA]</scope>
    <source>
        <strain>M275</strain>
    </source>
</reference>
<reference key="3">
    <citation type="journal article" date="1997" name="FEMS Immunol. Med. Microbiol.">
        <title>Cloning and characterization of a Campylobacter jejuni 72Dz/92 gene encoding a 30 kDa immunopositive protein, component of the ABC transport system; expression of the gene in avirulent Salmonella typhimurium.</title>
        <authorList>
            <person name="Pawelec D."/>
            <person name="Rozynek E."/>
            <person name="Popowski J."/>
            <person name="Jagusztyn-Krynicka E.K."/>
        </authorList>
    </citation>
    <scope>NUCLEOTIDE SEQUENCE [GENOMIC DNA]</scope>
    <source>
        <strain>72Dz/92</strain>
    </source>
</reference>
<reference key="4">
    <citation type="journal article" date="2000" name="Nature">
        <title>The genome sequence of the food-borne pathogen Campylobacter jejuni reveals hypervariable sequences.</title>
        <authorList>
            <person name="Parkhill J."/>
            <person name="Wren B.W."/>
            <person name="Mungall K.L."/>
            <person name="Ketley J.M."/>
            <person name="Churcher C.M."/>
            <person name="Basham D."/>
            <person name="Chillingworth T."/>
            <person name="Davies R.M."/>
            <person name="Feltwell T."/>
            <person name="Holroyd S."/>
            <person name="Jagels K."/>
            <person name="Karlyshev A.V."/>
            <person name="Moule S."/>
            <person name="Pallen M.J."/>
            <person name="Penn C.W."/>
            <person name="Quail M.A."/>
            <person name="Rajandream M.A."/>
            <person name="Rutherford K.M."/>
            <person name="van Vliet A.H.M."/>
            <person name="Whitehead S."/>
            <person name="Barrell B.G."/>
        </authorList>
    </citation>
    <scope>NUCLEOTIDE SEQUENCE [LARGE SCALE GENOMIC DNA]</scope>
    <source>
        <strain>ATCC 700819 / NCTC 11168</strain>
    </source>
</reference>
<name>HISJ_CAMJE</name>
<dbReference type="EMBL" id="U58045">
    <property type="protein sequence ID" value="AAC35419.1"/>
    <property type="molecule type" value="Genomic_DNA"/>
</dbReference>
<dbReference type="EMBL" id="Y10873">
    <property type="protein sequence ID" value="CAA71823.1"/>
    <property type="molecule type" value="Genomic_DNA"/>
</dbReference>
<dbReference type="EMBL" id="AL111168">
    <property type="protein sequence ID" value="CAL34871.1"/>
    <property type="molecule type" value="Genomic_DNA"/>
</dbReference>
<dbReference type="PIR" id="A81345">
    <property type="entry name" value="A81345"/>
</dbReference>
<dbReference type="RefSeq" id="YP_002344152.1">
    <property type="nucleotide sequence ID" value="NC_002163.1"/>
</dbReference>
<dbReference type="SMR" id="Q46125"/>
<dbReference type="IntAct" id="Q46125">
    <property type="interactions" value="16"/>
</dbReference>
<dbReference type="STRING" id="192222.Cj0734c"/>
<dbReference type="EnsemblBacteria" id="CAL34871">
    <property type="protein sequence ID" value="CAL34871"/>
    <property type="gene ID" value="Cj0734c"/>
</dbReference>
<dbReference type="GeneID" id="905052"/>
<dbReference type="KEGG" id="cje:Cj0734c"/>
<dbReference type="PATRIC" id="fig|192222.6.peg.726"/>
<dbReference type="HOGENOM" id="CLU_019602_18_2_7"/>
<dbReference type="OrthoDB" id="5431130at2"/>
<dbReference type="Proteomes" id="UP000000799">
    <property type="component" value="Chromosome"/>
</dbReference>
<dbReference type="GO" id="GO:0005886">
    <property type="term" value="C:plasma membrane"/>
    <property type="evidence" value="ECO:0007669"/>
    <property type="project" value="UniProtKB-SubCell"/>
</dbReference>
<dbReference type="GO" id="GO:0006865">
    <property type="term" value="P:amino acid transport"/>
    <property type="evidence" value="ECO:0007669"/>
    <property type="project" value="UniProtKB-KW"/>
</dbReference>
<dbReference type="CDD" id="cd13624">
    <property type="entry name" value="PBP2_Arg_Lys_His"/>
    <property type="match status" value="1"/>
</dbReference>
<dbReference type="Gene3D" id="3.40.190.10">
    <property type="entry name" value="Periplasmic binding protein-like II"/>
    <property type="match status" value="2"/>
</dbReference>
<dbReference type="InterPro" id="IPR018313">
    <property type="entry name" value="SBP_3_CS"/>
</dbReference>
<dbReference type="InterPro" id="IPR001638">
    <property type="entry name" value="Solute-binding_3/MltF_N"/>
</dbReference>
<dbReference type="PANTHER" id="PTHR35936:SF17">
    <property type="entry name" value="ARGININE-BINDING EXTRACELLULAR PROTEIN ARTP"/>
    <property type="match status" value="1"/>
</dbReference>
<dbReference type="PANTHER" id="PTHR35936">
    <property type="entry name" value="MEMBRANE-BOUND LYTIC MUREIN TRANSGLYCOSYLASE F"/>
    <property type="match status" value="1"/>
</dbReference>
<dbReference type="Pfam" id="PF00497">
    <property type="entry name" value="SBP_bac_3"/>
    <property type="match status" value="1"/>
</dbReference>
<dbReference type="SMART" id="SM00062">
    <property type="entry name" value="PBPb"/>
    <property type="match status" value="1"/>
</dbReference>
<dbReference type="SUPFAM" id="SSF53850">
    <property type="entry name" value="Periplasmic binding protein-like II"/>
    <property type="match status" value="1"/>
</dbReference>
<dbReference type="PROSITE" id="PS51257">
    <property type="entry name" value="PROKAR_LIPOPROTEIN"/>
    <property type="match status" value="1"/>
</dbReference>
<dbReference type="PROSITE" id="PS01039">
    <property type="entry name" value="SBP_BACTERIAL_3"/>
    <property type="match status" value="1"/>
</dbReference>
<keyword id="KW-0029">Amino-acid transport</keyword>
<keyword id="KW-1003">Cell membrane</keyword>
<keyword id="KW-0449">Lipoprotein</keyword>
<keyword id="KW-0472">Membrane</keyword>
<keyword id="KW-0564">Palmitate</keyword>
<keyword id="KW-1185">Reference proteome</keyword>
<keyword id="KW-0732">Signal</keyword>
<keyword id="KW-0813">Transport</keyword>
<accession>Q46125</accession>
<accession>Q0PAE5</accession>
<accession>Q9PPH3</accession>
<feature type="signal peptide" evidence="1">
    <location>
        <begin position="1"/>
        <end position="19"/>
    </location>
</feature>
<feature type="chain" id="PRO_0000031764" description="Probable histidine-binding protein">
    <location>
        <begin position="20"/>
        <end position="256"/>
    </location>
</feature>
<feature type="lipid moiety-binding region" description="N-palmitoyl cysteine" evidence="3">
    <location>
        <position position="20"/>
    </location>
</feature>
<feature type="lipid moiety-binding region" description="S-diacylglycerol cysteine" evidence="3">
    <location>
        <position position="20"/>
    </location>
</feature>
<feature type="sequence conflict" description="In Ref. 4; CAL34871." evidence="3" ref="4">
    <original>FLTAF</original>
    <variation>ILSIA</variation>
    <location>
        <begin position="4"/>
        <end position="8"/>
    </location>
</feature>
<feature type="sequence conflict" description="In Ref. 4; CAL34871." evidence="3" ref="4">
    <original>FT</original>
    <variation>LV</variation>
    <location>
        <begin position="12"/>
        <end position="13"/>
    </location>
</feature>
<feature type="sequence conflict" description="In Ref. 4; CAL34871." evidence="3" ref="4">
    <original>VACQNTKTENNASNEANTTLT</original>
    <variation>GACSDSKNKESNASVE</variation>
    <location>
        <begin position="18"/>
        <end position="38"/>
    </location>
</feature>
<feature type="sequence conflict" description="In Ref. 4; CAL34871." evidence="3" ref="4">
    <original>FKQD</original>
    <variation>YKEN</variation>
    <location>
        <begin position="52"/>
        <end position="55"/>
    </location>
</feature>
<feature type="sequence conflict" description="In Ref. 4; CAL34871." evidence="3" ref="4">
    <original>I</original>
    <variation>V</variation>
    <location>
        <position position="66"/>
    </location>
</feature>
<feature type="sequence conflict" description="In Ref. 4; CAL34871." evidence="3" ref="4">
    <original>E</original>
    <variation>K</variation>
    <location>
        <position position="76"/>
    </location>
</feature>
<feature type="sequence conflict" description="In Ref. 4; CAL34871." evidence="3" ref="4">
    <original>S</original>
    <variation>A</variation>
    <location>
        <position position="93"/>
    </location>
</feature>
<feature type="sequence conflict" description="In Ref. 4; CAL34871." evidence="3" ref="4">
    <original>D</original>
    <variation>N</variation>
    <location>
        <position position="228"/>
    </location>
</feature>